<dbReference type="EMBL" id="AK009361">
    <property type="protein sequence ID" value="BAC25254.1"/>
    <property type="molecule type" value="mRNA"/>
</dbReference>
<dbReference type="EMBL" id="AK154399">
    <property type="protein sequence ID" value="BAE32560.1"/>
    <property type="molecule type" value="mRNA"/>
</dbReference>
<dbReference type="EMBL" id="BC027328">
    <property type="protein sequence ID" value="AAH27328.1"/>
    <property type="molecule type" value="mRNA"/>
</dbReference>
<dbReference type="EMBL" id="BC056638">
    <property type="protein sequence ID" value="AAH56638.1"/>
    <property type="molecule type" value="mRNA"/>
</dbReference>
<dbReference type="EMBL" id="BC087949">
    <property type="protein sequence ID" value="AAH87949.1"/>
    <property type="molecule type" value="mRNA"/>
</dbReference>
<dbReference type="CCDS" id="CCDS22397.1"/>
<dbReference type="RefSeq" id="NP_932763.1">
    <property type="nucleotide sequence ID" value="NM_198095.3"/>
</dbReference>
<dbReference type="PDB" id="3NI0">
    <property type="method" value="X-ray"/>
    <property type="resolution" value="1.60 A"/>
    <property type="chains" value="A/B=53-151"/>
</dbReference>
<dbReference type="PDBsum" id="3NI0"/>
<dbReference type="SMR" id="Q8R2Q8"/>
<dbReference type="BioGRID" id="213524">
    <property type="interactions" value="2"/>
</dbReference>
<dbReference type="FunCoup" id="Q8R2Q8">
    <property type="interactions" value="101"/>
</dbReference>
<dbReference type="IntAct" id="Q8R2Q8">
    <property type="interactions" value="1"/>
</dbReference>
<dbReference type="STRING" id="10090.ENSMUSP00000051921"/>
<dbReference type="GlyCosmos" id="Q8R2Q8">
    <property type="glycosylation" value="3 sites, No reported glycans"/>
</dbReference>
<dbReference type="GlyGen" id="Q8R2Q8">
    <property type="glycosylation" value="4 sites, 1 N-linked glycan (1 site), 1 O-linked glycan (1 site)"/>
</dbReference>
<dbReference type="iPTMnet" id="Q8R2Q8"/>
<dbReference type="PhosphoSitePlus" id="Q8R2Q8"/>
<dbReference type="SwissPalm" id="Q8R2Q8"/>
<dbReference type="jPOST" id="Q8R2Q8"/>
<dbReference type="PaxDb" id="10090-ENSMUSP00000051921"/>
<dbReference type="PeptideAtlas" id="Q8R2Q8"/>
<dbReference type="ProteomicsDB" id="273708"/>
<dbReference type="Pumba" id="Q8R2Q8"/>
<dbReference type="Antibodypedia" id="1532">
    <property type="antibodies" value="823 antibodies from 44 providers"/>
</dbReference>
<dbReference type="DNASU" id="69550"/>
<dbReference type="Ensembl" id="ENSMUST00000051672.9">
    <property type="protein sequence ID" value="ENSMUSP00000051921.8"/>
    <property type="gene ID" value="ENSMUSG00000046718.9"/>
</dbReference>
<dbReference type="GeneID" id="69550"/>
<dbReference type="KEGG" id="mmu:69550"/>
<dbReference type="UCSC" id="uc009mdr.1">
    <property type="organism name" value="mouse"/>
</dbReference>
<dbReference type="AGR" id="MGI:1916800"/>
<dbReference type="CTD" id="684"/>
<dbReference type="MGI" id="MGI:1916800">
    <property type="gene designation" value="Bst2"/>
</dbReference>
<dbReference type="VEuPathDB" id="HostDB:ENSMUSG00000046718"/>
<dbReference type="eggNOG" id="ENOG502TB0V">
    <property type="taxonomic scope" value="Eukaryota"/>
</dbReference>
<dbReference type="GeneTree" id="ENSGT00390000013782"/>
<dbReference type="HOGENOM" id="CLU_104678_2_0_1"/>
<dbReference type="InParanoid" id="Q8R2Q8"/>
<dbReference type="OMA" id="DYCRVPM"/>
<dbReference type="OrthoDB" id="9635065at2759"/>
<dbReference type="PhylomeDB" id="Q8R2Q8"/>
<dbReference type="TreeFam" id="TF338345"/>
<dbReference type="Reactome" id="R-MMU-6798695">
    <property type="pathway name" value="Neutrophil degranulation"/>
</dbReference>
<dbReference type="BioGRID-ORCS" id="69550">
    <property type="hits" value="0 hits in 78 CRISPR screens"/>
</dbReference>
<dbReference type="ChiTaRS" id="Bst2">
    <property type="organism name" value="mouse"/>
</dbReference>
<dbReference type="EvolutionaryTrace" id="Q8R2Q8"/>
<dbReference type="PRO" id="PR:Q8R2Q8"/>
<dbReference type="Proteomes" id="UP000000589">
    <property type="component" value="Chromosome 8"/>
</dbReference>
<dbReference type="RNAct" id="Q8R2Q8">
    <property type="molecule type" value="protein"/>
</dbReference>
<dbReference type="Bgee" id="ENSMUSG00000046718">
    <property type="expression patterns" value="Expressed in left lobe of liver and 168 other cell types or tissues"/>
</dbReference>
<dbReference type="GO" id="GO:0016324">
    <property type="term" value="C:apical plasma membrane"/>
    <property type="evidence" value="ECO:0000250"/>
    <property type="project" value="UniProtKB"/>
</dbReference>
<dbReference type="GO" id="GO:0009986">
    <property type="term" value="C:cell surface"/>
    <property type="evidence" value="ECO:0000314"/>
    <property type="project" value="UniProtKB"/>
</dbReference>
<dbReference type="GO" id="GO:0005794">
    <property type="term" value="C:Golgi apparatus"/>
    <property type="evidence" value="ECO:0007669"/>
    <property type="project" value="UniProtKB-SubCell"/>
</dbReference>
<dbReference type="GO" id="GO:0005770">
    <property type="term" value="C:late endosome"/>
    <property type="evidence" value="ECO:0007669"/>
    <property type="project" value="UniProtKB-SubCell"/>
</dbReference>
<dbReference type="GO" id="GO:0045121">
    <property type="term" value="C:membrane raft"/>
    <property type="evidence" value="ECO:0007669"/>
    <property type="project" value="UniProtKB-SubCell"/>
</dbReference>
<dbReference type="GO" id="GO:0005886">
    <property type="term" value="C:plasma membrane"/>
    <property type="evidence" value="ECO:0000250"/>
    <property type="project" value="UniProtKB"/>
</dbReference>
<dbReference type="GO" id="GO:0098552">
    <property type="term" value="C:side of membrane"/>
    <property type="evidence" value="ECO:0007669"/>
    <property type="project" value="UniProtKB-KW"/>
</dbReference>
<dbReference type="GO" id="GO:0008191">
    <property type="term" value="F:metalloendopeptidase inhibitor activity"/>
    <property type="evidence" value="ECO:0000250"/>
    <property type="project" value="UniProtKB"/>
</dbReference>
<dbReference type="GO" id="GO:0051607">
    <property type="term" value="P:defense response to virus"/>
    <property type="evidence" value="ECO:0007669"/>
    <property type="project" value="InterPro"/>
</dbReference>
<dbReference type="GO" id="GO:0045087">
    <property type="term" value="P:innate immune response"/>
    <property type="evidence" value="ECO:0000315"/>
    <property type="project" value="UniProtKB"/>
</dbReference>
<dbReference type="GO" id="GO:0030308">
    <property type="term" value="P:negative regulation of cell growth"/>
    <property type="evidence" value="ECO:0000250"/>
    <property type="project" value="UniProtKB"/>
</dbReference>
<dbReference type="GO" id="GO:0030336">
    <property type="term" value="P:negative regulation of cell migration"/>
    <property type="evidence" value="ECO:0000250"/>
    <property type="project" value="UniProtKB"/>
</dbReference>
<dbReference type="GO" id="GO:1901253">
    <property type="term" value="P:negative regulation of intracellular transport of viral material"/>
    <property type="evidence" value="ECO:0000314"/>
    <property type="project" value="UniProtKB"/>
</dbReference>
<dbReference type="GO" id="GO:0002737">
    <property type="term" value="P:negative regulation of plasmacytoid dendritic cell cytokine production"/>
    <property type="evidence" value="ECO:0000250"/>
    <property type="project" value="UniProtKB"/>
</dbReference>
<dbReference type="GO" id="GO:0045071">
    <property type="term" value="P:negative regulation of viral genome replication"/>
    <property type="evidence" value="ECO:0000315"/>
    <property type="project" value="UniProtKB"/>
</dbReference>
<dbReference type="GO" id="GO:0032956">
    <property type="term" value="P:regulation of actin cytoskeleton organization"/>
    <property type="evidence" value="ECO:0000250"/>
    <property type="project" value="UniProtKB"/>
</dbReference>
<dbReference type="GO" id="GO:0035455">
    <property type="term" value="P:response to interferon-alpha"/>
    <property type="evidence" value="ECO:0000314"/>
    <property type="project" value="UniProtKB"/>
</dbReference>
<dbReference type="GO" id="GO:0035456">
    <property type="term" value="P:response to interferon-beta"/>
    <property type="evidence" value="ECO:0000314"/>
    <property type="project" value="UniProtKB"/>
</dbReference>
<dbReference type="GO" id="GO:0034341">
    <property type="term" value="P:response to type II interferon"/>
    <property type="evidence" value="ECO:0000314"/>
    <property type="project" value="UniProtKB"/>
</dbReference>
<dbReference type="GO" id="GO:0009615">
    <property type="term" value="P:response to virus"/>
    <property type="evidence" value="ECO:0000314"/>
    <property type="project" value="UniProtKB"/>
</dbReference>
<dbReference type="FunFam" id="1.20.5.1700:FF:000006">
    <property type="entry name" value="Bone marrow stromal antigen 2"/>
    <property type="match status" value="1"/>
</dbReference>
<dbReference type="Gene3D" id="1.20.5.1700">
    <property type="match status" value="1"/>
</dbReference>
<dbReference type="InterPro" id="IPR024886">
    <property type="entry name" value="BST2"/>
</dbReference>
<dbReference type="PANTHER" id="PTHR15190">
    <property type="entry name" value="BONE MARROW STROMAL ANTIGEN 2"/>
    <property type="match status" value="1"/>
</dbReference>
<dbReference type="PANTHER" id="PTHR15190:SF1">
    <property type="entry name" value="BONE MARROW STROMAL ANTIGEN 2"/>
    <property type="match status" value="1"/>
</dbReference>
<dbReference type="Pfam" id="PF16716">
    <property type="entry name" value="BST2"/>
    <property type="match status" value="1"/>
</dbReference>
<dbReference type="SUPFAM" id="SSF144284">
    <property type="entry name" value="Sec2 N-terminal region"/>
    <property type="match status" value="1"/>
</dbReference>
<sequence>MAPSFYHYLPVPMDEMGGKQGWGSHRQWLGAAILVVLFGVTLVILTIYFAVTANSVACRDGLRAQAECRNTTHLLQRQLTRTQDSLLQAETQANSCNLTVVTLQESLEKKVSQALEQQARIKELENEVTKLNQELENLRIQKETSSTVQVNSGSSMVVSSLLVLKVSLFLLF</sequence>
<protein>
    <recommendedName>
        <fullName>Bone marrow stromal antigen 2</fullName>
        <shortName>BST-2</shortName>
    </recommendedName>
    <alternativeName>
        <fullName>HM1.24 antigen</fullName>
    </alternativeName>
    <cdAntigenName>CD317</cdAntigenName>
</protein>
<accession>Q8R2Q8</accession>
<accession>Q8CEY7</accession>
<feature type="chain" id="PRO_0000253553" description="Bone marrow stromal antigen 2">
    <location>
        <begin position="1"/>
        <end position="152"/>
    </location>
</feature>
<feature type="propeptide" id="PRO_0000253554" description="Removed in mature form" evidence="4">
    <location>
        <begin position="153"/>
        <end position="172"/>
    </location>
</feature>
<feature type="topological domain" description="Cytoplasmic" evidence="4">
    <location>
        <begin position="1"/>
        <end position="30"/>
    </location>
</feature>
<feature type="transmembrane region" description="Helical; Signal-anchor for type II membrane protein" evidence="4">
    <location>
        <begin position="31"/>
        <end position="51"/>
    </location>
</feature>
<feature type="topological domain" description="Extracellular" evidence="4">
    <location>
        <begin position="52"/>
        <end position="152"/>
    </location>
</feature>
<feature type="coiled-coil region" evidence="10">
    <location>
        <begin position="74"/>
        <end position="147"/>
    </location>
</feature>
<feature type="lipid moiety-binding region" description="GPI-anchor amidated serine" evidence="4">
    <location>
        <position position="152"/>
    </location>
</feature>
<feature type="glycosylation site" description="N-linked (GlcNAc...) asparagine" evidence="7">
    <location>
        <position position="70"/>
    </location>
</feature>
<feature type="glycosylation site" description="N-linked (GlcNAc...) asparagine; atypical" evidence="7">
    <location>
        <position position="94"/>
    </location>
</feature>
<feature type="glycosylation site" description="N-linked (GlcNAc...) asparagine" evidence="4">
    <location>
        <position position="97"/>
    </location>
</feature>
<feature type="disulfide bond" description="Interchain" evidence="10">
    <location>
        <position position="58"/>
    </location>
</feature>
<feature type="disulfide bond" description="Interchain" evidence="10">
    <location>
        <position position="68"/>
    </location>
</feature>
<feature type="disulfide bond" description="Interchain" evidence="10">
    <location>
        <position position="96"/>
    </location>
</feature>
<feature type="helix" evidence="15">
    <location>
        <begin position="59"/>
        <end position="143"/>
    </location>
</feature>
<feature type="turn" evidence="15">
    <location>
        <begin position="144"/>
        <end position="146"/>
    </location>
</feature>
<comment type="function">
    <text evidence="5 6 8 9 11 12 13 14">IFN-induced antiviral host restriction factor which efficiently blocks the release of diverse mammalian enveloped viruses by directly tethering nascent virions to the membranes of infected cells. Acts as a direct physical tether, holding virions to the cell membrane and linking virions to each other. The tethered virions can be internalized by endocytosis and subsequently degraded or they can remain on the cell surface. In either case, their spread as cell-free virions is restricted. Its target viruses belong to diverse families, including retroviridae: human immunodeficiency virus type 1 (HIV-1), mouse mammary tumor virus (MMTV) and murine leukemia virus (MLV), filoviridae: ebola virus (EBOV), arenaviridae: lassa virus (LASV), and rhabdoviridae: vesicular stomatitis virus (VSV). Can inhibit cell surface proteolytic activity of MMP14 causing decreased activation of MMP15 which results in inhibition of cell growth and migration. Can stimulate signaling by LILRA4/ILT7 and consequently provide negative feedback to the production of IFN by plasmacytoid dendritic cells in response to viral infection. Plays a role in the organization of the subapical actin cytoskeleton in polarized epithelial cells.</text>
</comment>
<comment type="subunit">
    <text evidence="2 3">Parallel homodimer; disulfide-linked. May form homotetramers under reducing conditions. Isoform 1 and isoform 2 form homodimers and also heterodimers with each other. Dimerization is essential for its antiviral activity (By similarity). Interacts (via cytoplasmic domain) with ARHGAP44 (By similarity). Interacts with MMP14 (via C-terminal cytoplasmic tail). Interacts with LILRA4/ILT7. Interacts with RNF115 (By similarity).</text>
</comment>
<comment type="subcellular location">
    <subcellularLocation>
        <location>Golgi apparatus</location>
        <location>trans-Golgi network</location>
    </subcellularLocation>
    <subcellularLocation>
        <location>Cell membrane</location>
        <topology>Single-pass type II membrane protein</topology>
    </subcellularLocation>
    <subcellularLocation>
        <location evidence="1">Cell membrane</location>
        <topology evidence="1">Lipid-anchor</topology>
        <topology evidence="1">GPI-anchor</topology>
    </subcellularLocation>
    <subcellularLocation>
        <location evidence="1">Late endosome</location>
    </subcellularLocation>
    <subcellularLocation>
        <location evidence="1">Membrane raft</location>
    </subcellularLocation>
    <subcellularLocation>
        <location evidence="1">Cytoplasm</location>
    </subcellularLocation>
    <subcellularLocation>
        <location evidence="1">Apical cell membrane</location>
    </subcellularLocation>
    <text evidence="1">Shuttles between the cell membrane, where it is present predominantly in membrane/lipid rafts, and the trans-Golgi network. Forms a complex with MMP14 and localizes to the cytoplasm (By similarity).</text>
</comment>
<comment type="tissue specificity">
    <text evidence="5">In naive mice, specifically expressed on type I interferon-producing cells (at protein level).</text>
</comment>
<comment type="induction">
    <text evidence="5 6">By viral or other interferon-inducing stimulation in most cell types (at protein level). Down-regulated by ebola virus GP protein.</text>
</comment>
<comment type="domain">
    <text evidence="1">The extracellular coiled coil domain forms an extended 170 A long semi-flexible rod-like structure important for virion retention at the cell surface and prevention of virus spreading.</text>
</comment>
<gene>
    <name type="primary">Bst2</name>
</gene>
<keyword id="KW-0002">3D-structure</keyword>
<keyword id="KW-1003">Cell membrane</keyword>
<keyword id="KW-0175">Coiled coil</keyword>
<keyword id="KW-0963">Cytoplasm</keyword>
<keyword id="KW-1015">Disulfide bond</keyword>
<keyword id="KW-0967">Endosome</keyword>
<keyword id="KW-0325">Glycoprotein</keyword>
<keyword id="KW-0333">Golgi apparatus</keyword>
<keyword id="KW-0336">GPI-anchor</keyword>
<keyword id="KW-0391">Immunity</keyword>
<keyword id="KW-0399">Innate immunity</keyword>
<keyword id="KW-0449">Lipoprotein</keyword>
<keyword id="KW-0472">Membrane</keyword>
<keyword id="KW-1185">Reference proteome</keyword>
<keyword id="KW-0735">Signal-anchor</keyword>
<keyword id="KW-0812">Transmembrane</keyword>
<keyword id="KW-1133">Transmembrane helix</keyword>
<reference key="1">
    <citation type="journal article" date="2005" name="Science">
        <title>The transcriptional landscape of the mammalian genome.</title>
        <authorList>
            <person name="Carninci P."/>
            <person name="Kasukawa T."/>
            <person name="Katayama S."/>
            <person name="Gough J."/>
            <person name="Frith M.C."/>
            <person name="Maeda N."/>
            <person name="Oyama R."/>
            <person name="Ravasi T."/>
            <person name="Lenhard B."/>
            <person name="Wells C."/>
            <person name="Kodzius R."/>
            <person name="Shimokawa K."/>
            <person name="Bajic V.B."/>
            <person name="Brenner S.E."/>
            <person name="Batalov S."/>
            <person name="Forrest A.R."/>
            <person name="Zavolan M."/>
            <person name="Davis M.J."/>
            <person name="Wilming L.G."/>
            <person name="Aidinis V."/>
            <person name="Allen J.E."/>
            <person name="Ambesi-Impiombato A."/>
            <person name="Apweiler R."/>
            <person name="Aturaliya R.N."/>
            <person name="Bailey T.L."/>
            <person name="Bansal M."/>
            <person name="Baxter L."/>
            <person name="Beisel K.W."/>
            <person name="Bersano T."/>
            <person name="Bono H."/>
            <person name="Chalk A.M."/>
            <person name="Chiu K.P."/>
            <person name="Choudhary V."/>
            <person name="Christoffels A."/>
            <person name="Clutterbuck D.R."/>
            <person name="Crowe M.L."/>
            <person name="Dalla E."/>
            <person name="Dalrymple B.P."/>
            <person name="de Bono B."/>
            <person name="Della Gatta G."/>
            <person name="di Bernardo D."/>
            <person name="Down T."/>
            <person name="Engstrom P."/>
            <person name="Fagiolini M."/>
            <person name="Faulkner G."/>
            <person name="Fletcher C.F."/>
            <person name="Fukushima T."/>
            <person name="Furuno M."/>
            <person name="Futaki S."/>
            <person name="Gariboldi M."/>
            <person name="Georgii-Hemming P."/>
            <person name="Gingeras T.R."/>
            <person name="Gojobori T."/>
            <person name="Green R.E."/>
            <person name="Gustincich S."/>
            <person name="Harbers M."/>
            <person name="Hayashi Y."/>
            <person name="Hensch T.K."/>
            <person name="Hirokawa N."/>
            <person name="Hill D."/>
            <person name="Huminiecki L."/>
            <person name="Iacono M."/>
            <person name="Ikeo K."/>
            <person name="Iwama A."/>
            <person name="Ishikawa T."/>
            <person name="Jakt M."/>
            <person name="Kanapin A."/>
            <person name="Katoh M."/>
            <person name="Kawasawa Y."/>
            <person name="Kelso J."/>
            <person name="Kitamura H."/>
            <person name="Kitano H."/>
            <person name="Kollias G."/>
            <person name="Krishnan S.P."/>
            <person name="Kruger A."/>
            <person name="Kummerfeld S.K."/>
            <person name="Kurochkin I.V."/>
            <person name="Lareau L.F."/>
            <person name="Lazarevic D."/>
            <person name="Lipovich L."/>
            <person name="Liu J."/>
            <person name="Liuni S."/>
            <person name="McWilliam S."/>
            <person name="Madan Babu M."/>
            <person name="Madera M."/>
            <person name="Marchionni L."/>
            <person name="Matsuda H."/>
            <person name="Matsuzawa S."/>
            <person name="Miki H."/>
            <person name="Mignone F."/>
            <person name="Miyake S."/>
            <person name="Morris K."/>
            <person name="Mottagui-Tabar S."/>
            <person name="Mulder N."/>
            <person name="Nakano N."/>
            <person name="Nakauchi H."/>
            <person name="Ng P."/>
            <person name="Nilsson R."/>
            <person name="Nishiguchi S."/>
            <person name="Nishikawa S."/>
            <person name="Nori F."/>
            <person name="Ohara O."/>
            <person name="Okazaki Y."/>
            <person name="Orlando V."/>
            <person name="Pang K.C."/>
            <person name="Pavan W.J."/>
            <person name="Pavesi G."/>
            <person name="Pesole G."/>
            <person name="Petrovsky N."/>
            <person name="Piazza S."/>
            <person name="Reed J."/>
            <person name="Reid J.F."/>
            <person name="Ring B.Z."/>
            <person name="Ringwald M."/>
            <person name="Rost B."/>
            <person name="Ruan Y."/>
            <person name="Salzberg S.L."/>
            <person name="Sandelin A."/>
            <person name="Schneider C."/>
            <person name="Schoenbach C."/>
            <person name="Sekiguchi K."/>
            <person name="Semple C.A."/>
            <person name="Seno S."/>
            <person name="Sessa L."/>
            <person name="Sheng Y."/>
            <person name="Shibata Y."/>
            <person name="Shimada H."/>
            <person name="Shimada K."/>
            <person name="Silva D."/>
            <person name="Sinclair B."/>
            <person name="Sperling S."/>
            <person name="Stupka E."/>
            <person name="Sugiura K."/>
            <person name="Sultana R."/>
            <person name="Takenaka Y."/>
            <person name="Taki K."/>
            <person name="Tammoja K."/>
            <person name="Tan S.L."/>
            <person name="Tang S."/>
            <person name="Taylor M.S."/>
            <person name="Tegner J."/>
            <person name="Teichmann S.A."/>
            <person name="Ueda H.R."/>
            <person name="van Nimwegen E."/>
            <person name="Verardo R."/>
            <person name="Wei C.L."/>
            <person name="Yagi K."/>
            <person name="Yamanishi H."/>
            <person name="Zabarovsky E."/>
            <person name="Zhu S."/>
            <person name="Zimmer A."/>
            <person name="Hide W."/>
            <person name="Bult C."/>
            <person name="Grimmond S.M."/>
            <person name="Teasdale R.D."/>
            <person name="Liu E.T."/>
            <person name="Brusic V."/>
            <person name="Quackenbush J."/>
            <person name="Wahlestedt C."/>
            <person name="Mattick J.S."/>
            <person name="Hume D.A."/>
            <person name="Kai C."/>
            <person name="Sasaki D."/>
            <person name="Tomaru Y."/>
            <person name="Fukuda S."/>
            <person name="Kanamori-Katayama M."/>
            <person name="Suzuki M."/>
            <person name="Aoki J."/>
            <person name="Arakawa T."/>
            <person name="Iida J."/>
            <person name="Imamura K."/>
            <person name="Itoh M."/>
            <person name="Kato T."/>
            <person name="Kawaji H."/>
            <person name="Kawagashira N."/>
            <person name="Kawashima T."/>
            <person name="Kojima M."/>
            <person name="Kondo S."/>
            <person name="Konno H."/>
            <person name="Nakano K."/>
            <person name="Ninomiya N."/>
            <person name="Nishio T."/>
            <person name="Okada M."/>
            <person name="Plessy C."/>
            <person name="Shibata K."/>
            <person name="Shiraki T."/>
            <person name="Suzuki S."/>
            <person name="Tagami M."/>
            <person name="Waki K."/>
            <person name="Watahiki A."/>
            <person name="Okamura-Oho Y."/>
            <person name="Suzuki H."/>
            <person name="Kawai J."/>
            <person name="Hayashizaki Y."/>
        </authorList>
    </citation>
    <scope>NUCLEOTIDE SEQUENCE [LARGE SCALE MRNA]</scope>
    <source>
        <strain>C57BL/6J</strain>
        <strain>NOD</strain>
        <tissue>Dendritic cell</tissue>
        <tissue>Tongue</tissue>
    </source>
</reference>
<reference key="2">
    <citation type="journal article" date="2004" name="Genome Res.">
        <title>The status, quality, and expansion of the NIH full-length cDNA project: the Mammalian Gene Collection (MGC).</title>
        <authorList>
            <consortium name="The MGC Project Team"/>
        </authorList>
    </citation>
    <scope>NUCLEOTIDE SEQUENCE [LARGE SCALE MRNA]</scope>
    <source>
        <strain>Czech II</strain>
        <tissue>Liver</tissue>
        <tissue>Mammary tumor</tissue>
    </source>
</reference>
<reference key="3">
    <citation type="journal article" date="1999" name="Biochem. Biophys. Res. Commun.">
        <title>Molecular cloning and characterization of a surface antigen preferentially overexpressed on multiple myeloma cells.</title>
        <authorList>
            <person name="Ohtomo T."/>
            <person name="Sugamata Y."/>
            <person name="Ozaki Y."/>
            <person name="Ono K."/>
            <person name="Yoshimura Y."/>
            <person name="Kawai S."/>
            <person name="Koishihara Y."/>
            <person name="Ozaki S."/>
            <person name="Kosaka M."/>
            <person name="Hirano T."/>
            <person name="Tsuchiya M."/>
        </authorList>
    </citation>
    <scope>IDENTIFICATION</scope>
</reference>
<reference key="4">
    <citation type="journal article" date="2006" name="J. Immunol.">
        <title>Bone marrow stromal cell antigen 2 is a specific marker of type I IFN-producing cells in the naive mouse, but a promiscuous cell surface antigen following IFN stimulation.</title>
        <authorList>
            <person name="Blasius A.L."/>
            <person name="Giurisato E."/>
            <person name="Cella M."/>
            <person name="Schreiber R.D."/>
            <person name="Shaw A.S."/>
            <person name="Colonna M."/>
        </authorList>
    </citation>
    <scope>TISSUE SPECIFICITY</scope>
    <scope>SUBCELLULAR LOCATION</scope>
    <scope>INDUCTION BY INTERFERONS</scope>
    <scope>FUNCTION</scope>
</reference>
<reference key="5">
    <citation type="journal article" date="2009" name="Nat. Biotechnol.">
        <title>Mass-spectrometric identification and relative quantification of N-linked cell surface glycoproteins.</title>
        <authorList>
            <person name="Wollscheid B."/>
            <person name="Bausch-Fluck D."/>
            <person name="Henderson C."/>
            <person name="O'Brien R."/>
            <person name="Bibel M."/>
            <person name="Schiess R."/>
            <person name="Aebersold R."/>
            <person name="Watts J.D."/>
        </authorList>
    </citation>
    <scope>GLYCOSYLATION [LARGE SCALE ANALYSIS] AT ASN-70 AND ASN-94</scope>
</reference>
<reference key="6">
    <citation type="journal article" date="2009" name="Proc. Natl. Acad. Sci. U.S.A.">
        <title>Tetherin-mediated restriction of filovirus budding is antagonized by the Ebola glycoprotein.</title>
        <authorList>
            <person name="Kaletsky R.L."/>
            <person name="Francica J.R."/>
            <person name="Agrawal-Gamse C."/>
            <person name="Bates P."/>
        </authorList>
    </citation>
    <scope>FUNCTION</scope>
    <scope>INDUCTION BY EBOLA GP PROTEIN</scope>
</reference>
<reference key="7">
    <citation type="journal article" date="2010" name="Cell">
        <title>A tissue-specific atlas of mouse protein phosphorylation and expression.</title>
        <authorList>
            <person name="Huttlin E.L."/>
            <person name="Jedrychowski M.P."/>
            <person name="Elias J.E."/>
            <person name="Goswami T."/>
            <person name="Rad R."/>
            <person name="Beausoleil S.A."/>
            <person name="Villen J."/>
            <person name="Haas W."/>
            <person name="Sowa M.E."/>
            <person name="Gygi S.P."/>
        </authorList>
    </citation>
    <scope>IDENTIFICATION BY MASS SPECTROMETRY [LARGE SCALE ANALYSIS]</scope>
    <source>
        <tissue>Brown adipose tissue</tissue>
        <tissue>Heart</tissue>
        <tissue>Liver</tissue>
        <tissue>Lung</tissue>
        <tissue>Spleen</tissue>
    </source>
</reference>
<reference key="8">
    <citation type="journal article" date="2010" name="J. Virol.">
        <title>Infectious Lassa virus, but not filoviruses, is restricted by BST-2/tetherin.</title>
        <authorList>
            <person name="Radoshitzky S.R."/>
            <person name="Dong L."/>
            <person name="Chi X."/>
            <person name="Clester J.C."/>
            <person name="Retterer C."/>
            <person name="Spurgers K."/>
            <person name="Kuhn J.H."/>
            <person name="Sandwick S."/>
            <person name="Ruthel G."/>
            <person name="Kota K."/>
            <person name="Boltz D."/>
            <person name="Warren T."/>
            <person name="Kranzusch P.J."/>
            <person name="Whelan S.P."/>
            <person name="Bavari S."/>
        </authorList>
    </citation>
    <scope>FUNCTION</scope>
</reference>
<reference key="9">
    <citation type="journal article" date="2010" name="J. Virol.">
        <title>Endogenous CD317/Tetherin limits replication of HIV-1 and murine leukemia virus in rodent cells and is resistant to antagonists from primate viruses.</title>
        <authorList>
            <person name="Goffinet C."/>
            <person name="Schmidt S."/>
            <person name="Kern C."/>
            <person name="Oberbremer L."/>
            <person name="Keppler O.T."/>
        </authorList>
    </citation>
    <scope>FUNCTION</scope>
</reference>
<reference key="10">
    <citation type="journal article" date="2011" name="DNA Cell Biol.">
        <title>Interferon-induced tetherin restricts vesicular stomatitis virus release in neurons.</title>
        <authorList>
            <person name="Sarojini S."/>
            <person name="Theofanis T."/>
            <person name="Reiss C.S."/>
        </authorList>
    </citation>
    <scope>FUNCTION</scope>
    <scope>SUBCELLULAR LOCATION</scope>
</reference>
<reference key="11">
    <citation type="journal article" date="2011" name="Proc. Natl. Acad. Sci. U.S.A.">
        <title>Tetherin is a key effector of the antiretroviral activity of type I interferon in vitro and in vivo.</title>
        <authorList>
            <person name="Liberatore R.A."/>
            <person name="Bieniasz P.D."/>
        </authorList>
    </citation>
    <scope>FUNCTION</scope>
</reference>
<reference key="12">
    <citation type="journal article" date="2012" name="J. Immunol.">
        <title>Paradoxical roles of BST2/tetherin in promoting type I IFN response and viral infection.</title>
        <authorList>
            <person name="Swiecki M."/>
            <person name="Wang Y."/>
            <person name="Gilfillan S."/>
            <person name="Lenschow D.J."/>
            <person name="Colonna M."/>
        </authorList>
    </citation>
    <scope>FUNCTION</scope>
</reference>
<reference key="13">
    <citation type="journal article" date="2012" name="Mol. Biol. Int.">
        <title>Restriction of retroviral replication by tetherin/BST-2.</title>
        <authorList>
            <person name="Hammonds J."/>
            <person name="Wang J.J."/>
            <person name="Spearman P."/>
        </authorList>
    </citation>
    <scope>REVIEW</scope>
</reference>
<reference key="14">
    <citation type="journal article" date="2012" name="Retrovirology">
        <title>Bone marrow stromal cell antigen 2 (BST-2) restricts mouse mammary tumor virus (MMTV) replication in vivo.</title>
        <authorList>
            <person name="Jones P.H."/>
            <person name="Mehta H.V."/>
            <person name="Maric M."/>
            <person name="Roller R.J."/>
            <person name="Okeoma C.M."/>
        </authorList>
    </citation>
    <scope>FUNCTION</scope>
    <scope>SUBCELLULAR LOCATION</scope>
</reference>
<reference key="15">
    <citation type="journal article" date="2011" name="J. Biol. Chem.">
        <title>Structural and biophysical analysis of BST-2/tetherin ectodomains reveals an evolutionary conserved design to inhibit virus release.</title>
        <authorList>
            <person name="Swiecki M."/>
            <person name="Scheaffer S.M."/>
            <person name="Allaire M."/>
            <person name="Fremont D.H."/>
            <person name="Colonna M."/>
            <person name="Brett T.J."/>
        </authorList>
    </citation>
    <scope>X-RAY CRYSTALLOGRAPHY (1.6 ANGSTROMS) OF 53-151</scope>
    <scope>COILED-COIL DOMAIN</scope>
    <scope>SUBUNIT</scope>
    <scope>DISULFIDE BONDS</scope>
</reference>
<proteinExistence type="evidence at protein level"/>
<organism>
    <name type="scientific">Mus musculus</name>
    <name type="common">Mouse</name>
    <dbReference type="NCBI Taxonomy" id="10090"/>
    <lineage>
        <taxon>Eukaryota</taxon>
        <taxon>Metazoa</taxon>
        <taxon>Chordata</taxon>
        <taxon>Craniata</taxon>
        <taxon>Vertebrata</taxon>
        <taxon>Euteleostomi</taxon>
        <taxon>Mammalia</taxon>
        <taxon>Eutheria</taxon>
        <taxon>Euarchontoglires</taxon>
        <taxon>Glires</taxon>
        <taxon>Rodentia</taxon>
        <taxon>Myomorpha</taxon>
        <taxon>Muroidea</taxon>
        <taxon>Muridae</taxon>
        <taxon>Murinae</taxon>
        <taxon>Mus</taxon>
        <taxon>Mus</taxon>
    </lineage>
</organism>
<name>BST2_MOUSE</name>
<evidence type="ECO:0000250" key="1"/>
<evidence type="ECO:0000250" key="2">
    <source>
        <dbReference type="UniProtKB" id="Q10589"/>
    </source>
</evidence>
<evidence type="ECO:0000250" key="3">
    <source>
        <dbReference type="UniProtKB" id="Q811A2"/>
    </source>
</evidence>
<evidence type="ECO:0000255" key="4"/>
<evidence type="ECO:0000269" key="5">
    <source>
    </source>
</evidence>
<evidence type="ECO:0000269" key="6">
    <source>
    </source>
</evidence>
<evidence type="ECO:0000269" key="7">
    <source>
    </source>
</evidence>
<evidence type="ECO:0000269" key="8">
    <source>
    </source>
</evidence>
<evidence type="ECO:0000269" key="9">
    <source>
    </source>
</evidence>
<evidence type="ECO:0000269" key="10">
    <source>
    </source>
</evidence>
<evidence type="ECO:0000269" key="11">
    <source>
    </source>
</evidence>
<evidence type="ECO:0000269" key="12">
    <source>
    </source>
</evidence>
<evidence type="ECO:0000269" key="13">
    <source>
    </source>
</evidence>
<evidence type="ECO:0000269" key="14">
    <source>
    </source>
</evidence>
<evidence type="ECO:0007829" key="15">
    <source>
        <dbReference type="PDB" id="3NI0"/>
    </source>
</evidence>